<comment type="catalytic activity">
    <reaction evidence="1">
        <text>D-erythro-1-(imidazol-4-yl)glycerol 3-phosphate = 3-(imidazol-4-yl)-2-oxopropyl phosphate + H2O</text>
        <dbReference type="Rhea" id="RHEA:11040"/>
        <dbReference type="ChEBI" id="CHEBI:15377"/>
        <dbReference type="ChEBI" id="CHEBI:57766"/>
        <dbReference type="ChEBI" id="CHEBI:58278"/>
        <dbReference type="EC" id="4.2.1.19"/>
    </reaction>
</comment>
<comment type="pathway">
    <text evidence="1">Amino-acid biosynthesis; L-histidine biosynthesis; L-histidine from 5-phospho-alpha-D-ribose 1-diphosphate: step 6/9.</text>
</comment>
<comment type="subcellular location">
    <subcellularLocation>
        <location evidence="1">Cytoplasm</location>
    </subcellularLocation>
</comment>
<comment type="similarity">
    <text evidence="1">Belongs to the imidazoleglycerol-phosphate dehydratase family.</text>
</comment>
<proteinExistence type="inferred from homology"/>
<protein>
    <recommendedName>
        <fullName evidence="1">Imidazoleglycerol-phosphate dehydratase</fullName>
        <shortName evidence="1">IGPD</shortName>
        <ecNumber evidence="1">4.2.1.19</ecNumber>
    </recommendedName>
</protein>
<keyword id="KW-0028">Amino-acid biosynthesis</keyword>
<keyword id="KW-0963">Cytoplasm</keyword>
<keyword id="KW-0368">Histidine biosynthesis</keyword>
<keyword id="KW-0456">Lyase</keyword>
<keyword id="KW-1185">Reference proteome</keyword>
<organism>
    <name type="scientific">Desulfitobacterium hafniense (strain Y51)</name>
    <dbReference type="NCBI Taxonomy" id="138119"/>
    <lineage>
        <taxon>Bacteria</taxon>
        <taxon>Bacillati</taxon>
        <taxon>Bacillota</taxon>
        <taxon>Clostridia</taxon>
        <taxon>Eubacteriales</taxon>
        <taxon>Desulfitobacteriaceae</taxon>
        <taxon>Desulfitobacterium</taxon>
    </lineage>
</organism>
<reference key="1">
    <citation type="journal article" date="2006" name="J. Bacteriol.">
        <title>Complete genome sequence of the dehalorespiring bacterium Desulfitobacterium hafniense Y51 and comparison with Dehalococcoides ethenogenes 195.</title>
        <authorList>
            <person name="Nonaka H."/>
            <person name="Keresztes G."/>
            <person name="Shinoda Y."/>
            <person name="Ikenaga Y."/>
            <person name="Abe M."/>
            <person name="Naito K."/>
            <person name="Inatomi K."/>
            <person name="Furukawa K."/>
            <person name="Inui M."/>
            <person name="Yukawa H."/>
        </authorList>
    </citation>
    <scope>NUCLEOTIDE SEQUENCE [LARGE SCALE GENOMIC DNA]</scope>
    <source>
        <strain>Y51</strain>
    </source>
</reference>
<gene>
    <name evidence="1" type="primary">hisB</name>
    <name type="ordered locus">DSY3911</name>
</gene>
<evidence type="ECO:0000255" key="1">
    <source>
        <dbReference type="HAMAP-Rule" id="MF_00076"/>
    </source>
</evidence>
<name>HIS7_DESHY</name>
<feature type="chain" id="PRO_0000336310" description="Imidazoleglycerol-phosphate dehydratase">
    <location>
        <begin position="1"/>
        <end position="196"/>
    </location>
</feature>
<dbReference type="EC" id="4.2.1.19" evidence="1"/>
<dbReference type="EMBL" id="AP008230">
    <property type="protein sequence ID" value="BAE85700.1"/>
    <property type="molecule type" value="Genomic_DNA"/>
</dbReference>
<dbReference type="SMR" id="Q24QJ2"/>
<dbReference type="STRING" id="138119.DSY3911"/>
<dbReference type="KEGG" id="dsy:DSY3911"/>
<dbReference type="eggNOG" id="COG0131">
    <property type="taxonomic scope" value="Bacteria"/>
</dbReference>
<dbReference type="HOGENOM" id="CLU_044308_3_0_9"/>
<dbReference type="UniPathway" id="UPA00031">
    <property type="reaction ID" value="UER00011"/>
</dbReference>
<dbReference type="Proteomes" id="UP000001946">
    <property type="component" value="Chromosome"/>
</dbReference>
<dbReference type="GO" id="GO:0005737">
    <property type="term" value="C:cytoplasm"/>
    <property type="evidence" value="ECO:0007669"/>
    <property type="project" value="UniProtKB-SubCell"/>
</dbReference>
<dbReference type="GO" id="GO:0004424">
    <property type="term" value="F:imidazoleglycerol-phosphate dehydratase activity"/>
    <property type="evidence" value="ECO:0007669"/>
    <property type="project" value="UniProtKB-UniRule"/>
</dbReference>
<dbReference type="GO" id="GO:0000105">
    <property type="term" value="P:L-histidine biosynthetic process"/>
    <property type="evidence" value="ECO:0007669"/>
    <property type="project" value="UniProtKB-UniRule"/>
</dbReference>
<dbReference type="CDD" id="cd07914">
    <property type="entry name" value="IGPD"/>
    <property type="match status" value="1"/>
</dbReference>
<dbReference type="FunFam" id="3.30.230.40:FF:000001">
    <property type="entry name" value="Imidazoleglycerol-phosphate dehydratase HisB"/>
    <property type="match status" value="1"/>
</dbReference>
<dbReference type="FunFam" id="3.30.230.40:FF:000003">
    <property type="entry name" value="Imidazoleglycerol-phosphate dehydratase HisB"/>
    <property type="match status" value="1"/>
</dbReference>
<dbReference type="Gene3D" id="3.30.230.40">
    <property type="entry name" value="Imidazole glycerol phosphate dehydratase, domain 1"/>
    <property type="match status" value="2"/>
</dbReference>
<dbReference type="HAMAP" id="MF_00076">
    <property type="entry name" value="HisB"/>
    <property type="match status" value="1"/>
</dbReference>
<dbReference type="InterPro" id="IPR038494">
    <property type="entry name" value="IGPD_sf"/>
</dbReference>
<dbReference type="InterPro" id="IPR000807">
    <property type="entry name" value="ImidazoleglycerolP_deHydtase"/>
</dbReference>
<dbReference type="InterPro" id="IPR020565">
    <property type="entry name" value="ImidazoleglycerP_deHydtase_CS"/>
</dbReference>
<dbReference type="InterPro" id="IPR020568">
    <property type="entry name" value="Ribosomal_Su5_D2-typ_SF"/>
</dbReference>
<dbReference type="NCBIfam" id="NF002111">
    <property type="entry name" value="PRK00951.2-1"/>
    <property type="match status" value="1"/>
</dbReference>
<dbReference type="NCBIfam" id="NF002114">
    <property type="entry name" value="PRK00951.2-4"/>
    <property type="match status" value="1"/>
</dbReference>
<dbReference type="PANTHER" id="PTHR23133:SF2">
    <property type="entry name" value="IMIDAZOLEGLYCEROL-PHOSPHATE DEHYDRATASE"/>
    <property type="match status" value="1"/>
</dbReference>
<dbReference type="PANTHER" id="PTHR23133">
    <property type="entry name" value="IMIDAZOLEGLYCEROL-PHOSPHATE DEHYDRATASE HIS7"/>
    <property type="match status" value="1"/>
</dbReference>
<dbReference type="Pfam" id="PF00475">
    <property type="entry name" value="IGPD"/>
    <property type="match status" value="1"/>
</dbReference>
<dbReference type="SUPFAM" id="SSF54211">
    <property type="entry name" value="Ribosomal protein S5 domain 2-like"/>
    <property type="match status" value="2"/>
</dbReference>
<dbReference type="PROSITE" id="PS00954">
    <property type="entry name" value="IGP_DEHYDRATASE_1"/>
    <property type="match status" value="1"/>
</dbReference>
<dbReference type="PROSITE" id="PS00955">
    <property type="entry name" value="IGP_DEHYDRATASE_2"/>
    <property type="match status" value="1"/>
</dbReference>
<accession>Q24QJ2</accession>
<sequence length="196" mass="21808">MEMREAYIERQTKETRIRVKLNLDGAGTAQVDTGIGFFDHMLEALARFGYLDLEVAAEGDLQVDPHHTIEDCGLVFGQAIREALGERRGIERVGDTLLPMDEALVQVALDLSNRPYLVWDVECPEGMVGGFPVEMAEEFFRAVSVQAGITLHIRLFSGKNRHHILEAIFKGFGRALGLALRENPRFQGVLSTKGVL</sequence>